<evidence type="ECO:0000255" key="1"/>
<evidence type="ECO:0000305" key="2"/>
<proteinExistence type="inferred from homology"/>
<organism>
    <name type="scientific">Caenorhabditis elegans</name>
    <dbReference type="NCBI Taxonomy" id="6239"/>
    <lineage>
        <taxon>Eukaryota</taxon>
        <taxon>Metazoa</taxon>
        <taxon>Ecdysozoa</taxon>
        <taxon>Nematoda</taxon>
        <taxon>Chromadorea</taxon>
        <taxon>Rhabditida</taxon>
        <taxon>Rhabditina</taxon>
        <taxon>Rhabditomorpha</taxon>
        <taxon>Rhabditoidea</taxon>
        <taxon>Rhabditidae</taxon>
        <taxon>Peloderinae</taxon>
        <taxon>Caenorhabditis</taxon>
    </lineage>
</organism>
<reference key="1">
    <citation type="journal article" date="1994" name="Nature">
        <title>2.2 Mb of contiguous nucleotide sequence from chromosome III of C. elegans.</title>
        <authorList>
            <person name="Wilson R."/>
            <person name="Ainscough R."/>
            <person name="Anderson K."/>
            <person name="Baynes C."/>
            <person name="Berks M."/>
            <person name="Bonfield J."/>
            <person name="Burton J."/>
            <person name="Connell M."/>
            <person name="Copsey T."/>
            <person name="Cooper J."/>
            <person name="Coulson A."/>
            <person name="Craxton M."/>
            <person name="Dear S."/>
            <person name="Du Z."/>
            <person name="Durbin R."/>
            <person name="Favello A."/>
            <person name="Fraser A."/>
            <person name="Fulton L."/>
            <person name="Gardner A."/>
            <person name="Green P."/>
            <person name="Hawkins T."/>
            <person name="Hillier L."/>
            <person name="Jier M."/>
            <person name="Johnston L."/>
            <person name="Jones M."/>
            <person name="Kershaw J."/>
            <person name="Kirsten J."/>
            <person name="Laisster N."/>
            <person name="Latreille P."/>
            <person name="Lightning J."/>
            <person name="Lloyd C."/>
            <person name="Mortimore B."/>
            <person name="O'Callaghan M."/>
            <person name="Parsons J."/>
            <person name="Percy C."/>
            <person name="Rifken L."/>
            <person name="Roopra A."/>
            <person name="Saunders D."/>
            <person name="Shownkeen R."/>
            <person name="Sims M."/>
            <person name="Smaldon N."/>
            <person name="Smith A."/>
            <person name="Smith M."/>
            <person name="Sonnhammer E."/>
            <person name="Staden R."/>
            <person name="Sulston J."/>
            <person name="Thierry-Mieg J."/>
            <person name="Thomas K."/>
            <person name="Vaudin M."/>
            <person name="Vaughan K."/>
            <person name="Waterston R."/>
            <person name="Watson A."/>
            <person name="Weinstock L."/>
            <person name="Wilkinson-Sproat J."/>
            <person name="Wohldman P."/>
        </authorList>
    </citation>
    <scope>NUCLEOTIDE SEQUENCE [LARGE SCALE GENOMIC DNA]</scope>
    <source>
        <strain>Bristol N2</strain>
    </source>
</reference>
<reference key="2">
    <citation type="journal article" date="1998" name="Science">
        <title>Genome sequence of the nematode C. elegans: a platform for investigating biology.</title>
        <authorList>
            <consortium name="The C. elegans sequencing consortium"/>
        </authorList>
    </citation>
    <scope>NUCLEOTIDE SEQUENCE [LARGE SCALE GENOMIC DNA]</scope>
    <source>
        <strain>Bristol N2</strain>
    </source>
</reference>
<feature type="chain" id="PRO_0000104578" description="Serpentine receptor class XA 10">
    <location>
        <begin position="1"/>
        <end position="335"/>
    </location>
</feature>
<feature type="topological domain" description="Extracellular" evidence="1">
    <location>
        <begin position="1"/>
        <end position="10"/>
    </location>
</feature>
<feature type="transmembrane region" description="Helical; Name=1" evidence="1">
    <location>
        <begin position="11"/>
        <end position="31"/>
    </location>
</feature>
<feature type="topological domain" description="Cytoplasmic" evidence="1">
    <location>
        <begin position="32"/>
        <end position="46"/>
    </location>
</feature>
<feature type="transmembrane region" description="Helical; Name=2" evidence="1">
    <location>
        <begin position="47"/>
        <end position="67"/>
    </location>
</feature>
<feature type="topological domain" description="Extracellular" evidence="1">
    <location>
        <begin position="68"/>
        <end position="82"/>
    </location>
</feature>
<feature type="transmembrane region" description="Helical; Name=3" evidence="1">
    <location>
        <begin position="83"/>
        <end position="103"/>
    </location>
</feature>
<feature type="topological domain" description="Cytoplasmic" evidence="1">
    <location>
        <begin position="104"/>
        <end position="126"/>
    </location>
</feature>
<feature type="transmembrane region" description="Helical; Name=4" evidence="1">
    <location>
        <begin position="127"/>
        <end position="147"/>
    </location>
</feature>
<feature type="topological domain" description="Extracellular" evidence="1">
    <location>
        <begin position="148"/>
        <end position="177"/>
    </location>
</feature>
<feature type="transmembrane region" description="Helical; Name=5" evidence="1">
    <location>
        <begin position="178"/>
        <end position="198"/>
    </location>
</feature>
<feature type="topological domain" description="Cytoplasmic" evidence="1">
    <location>
        <begin position="199"/>
        <end position="238"/>
    </location>
</feature>
<feature type="transmembrane region" description="Helical; Name=6" evidence="1">
    <location>
        <begin position="239"/>
        <end position="259"/>
    </location>
</feature>
<feature type="topological domain" description="Extracellular" evidence="1">
    <location>
        <begin position="260"/>
        <end position="276"/>
    </location>
</feature>
<feature type="transmembrane region" description="Helical; Name=7" evidence="1">
    <location>
        <begin position="277"/>
        <end position="297"/>
    </location>
</feature>
<feature type="topological domain" description="Cytoplasmic" evidence="1">
    <location>
        <begin position="298"/>
        <end position="319"/>
    </location>
</feature>
<sequence length="335" mass="38675">MDVDAAVVKRIALWVYETCSVFNLFYCITLSLAIKTSKNNALPATYIYNMAISNALLVIFGIMVYILPYYMSDKTYKTYRDSIGAMISVGVTFNYLHPMLTLILMTINRIAVVVSMQASQLFTSSKIWLYTSFHMTANFACLIIPYLSECRINYDIRKVGFISECAPDRHQITTFSNYYSVFFPFVAFFFNVLVIINFKLQRSPTYTKIKNMFRRGNGDQFTSMPSDVLKAKKKTERMLMIQAFITAFYLSVYELTSLVLRVVPELFGNLSLDGKLAFTYFRLAQVPCHVFLVYFIFTPVTRKIYMDFVRERVFCMKPAKKKTIKVSATTTSTKK</sequence>
<keyword id="KW-0472">Membrane</keyword>
<keyword id="KW-1185">Reference proteome</keyword>
<keyword id="KW-0812">Transmembrane</keyword>
<keyword id="KW-1133">Transmembrane helix</keyword>
<protein>
    <recommendedName>
        <fullName>Serpentine receptor class XA 10</fullName>
        <shortName>Protein srxa-10</shortName>
    </recommendedName>
</protein>
<comment type="subcellular location">
    <subcellularLocation>
        <location evidence="2">Membrane</location>
        <topology evidence="2">Multi-pass membrane protein</topology>
    </subcellularLocation>
</comment>
<comment type="similarity">
    <text evidence="2">Belongs to the nematode receptor-like protein srxa family.</text>
</comment>
<gene>
    <name type="primary">srxa-10</name>
    <name type="ORF">R10E11.7</name>
</gene>
<name>SRX10_CAEEL</name>
<dbReference type="EMBL" id="Z29095">
    <property type="protein sequence ID" value="CAA82352.3"/>
    <property type="molecule type" value="Genomic_DNA"/>
</dbReference>
<dbReference type="PIR" id="S40719">
    <property type="entry name" value="S40719"/>
</dbReference>
<dbReference type="RefSeq" id="NP_499171.3">
    <property type="nucleotide sequence ID" value="NM_066770.4"/>
</dbReference>
<dbReference type="STRING" id="6239.R10E11.7.1"/>
<dbReference type="PaxDb" id="6239-R10E11.7"/>
<dbReference type="EnsemblMetazoa" id="R10E11.7.1">
    <property type="protein sequence ID" value="R10E11.7.1"/>
    <property type="gene ID" value="WBGene00011219"/>
</dbReference>
<dbReference type="GeneID" id="187780"/>
<dbReference type="KEGG" id="cel:CELE_R10E11.7"/>
<dbReference type="UCSC" id="R10E11.7">
    <property type="organism name" value="c. elegans"/>
</dbReference>
<dbReference type="AGR" id="WB:WBGene00011219"/>
<dbReference type="CTD" id="187780"/>
<dbReference type="WormBase" id="R10E11.7">
    <property type="protein sequence ID" value="CE47925"/>
    <property type="gene ID" value="WBGene00011219"/>
    <property type="gene designation" value="srxa-10"/>
</dbReference>
<dbReference type="eggNOG" id="ENOG502TIA4">
    <property type="taxonomic scope" value="Eukaryota"/>
</dbReference>
<dbReference type="GeneTree" id="ENSGT00970000195853"/>
<dbReference type="HOGENOM" id="CLU_069454_0_0_1"/>
<dbReference type="InParanoid" id="P34551"/>
<dbReference type="OMA" id="MTINRIA"/>
<dbReference type="PhylomeDB" id="P34551"/>
<dbReference type="PRO" id="PR:P34551"/>
<dbReference type="Proteomes" id="UP000001940">
    <property type="component" value="Chromosome III"/>
</dbReference>
<dbReference type="GO" id="GO:0016020">
    <property type="term" value="C:membrane"/>
    <property type="evidence" value="ECO:0007669"/>
    <property type="project" value="UniProtKB-SubCell"/>
</dbReference>
<dbReference type="Gene3D" id="1.20.1070.10">
    <property type="entry name" value="Rhodopsin 7-helix transmembrane proteins"/>
    <property type="match status" value="1"/>
</dbReference>
<dbReference type="InterPro" id="IPR005047">
    <property type="entry name" value="7TM_GPCR_serpentine_rcpt_Srxa"/>
</dbReference>
<dbReference type="PANTHER" id="PTHR23018:SF3">
    <property type="entry name" value="SERPENTINE RECEPTOR CLASS XA 10"/>
    <property type="match status" value="1"/>
</dbReference>
<dbReference type="PANTHER" id="PTHR23018">
    <property type="entry name" value="SERPENTINE RECEPTOR, CLASS XA-RELATED"/>
    <property type="match status" value="1"/>
</dbReference>
<dbReference type="Pfam" id="PF03383">
    <property type="entry name" value="Serpentine_r_xa"/>
    <property type="match status" value="1"/>
</dbReference>
<dbReference type="SUPFAM" id="SSF81321">
    <property type="entry name" value="Family A G protein-coupled receptor-like"/>
    <property type="match status" value="1"/>
</dbReference>
<accession>P34551</accession>